<organism>
    <name type="scientific">Legionella pneumophila subsp. pneumophila (strain Philadelphia 1 / ATCC 33152 / DSM 7513)</name>
    <dbReference type="NCBI Taxonomy" id="272624"/>
    <lineage>
        <taxon>Bacteria</taxon>
        <taxon>Pseudomonadati</taxon>
        <taxon>Pseudomonadota</taxon>
        <taxon>Gammaproteobacteria</taxon>
        <taxon>Legionellales</taxon>
        <taxon>Legionellaceae</taxon>
        <taxon>Legionella</taxon>
    </lineage>
</organism>
<name>LGT_LEGPH</name>
<evidence type="ECO:0000255" key="1">
    <source>
        <dbReference type="HAMAP-Rule" id="MF_01147"/>
    </source>
</evidence>
<feature type="chain" id="PRO_0000172621" description="Phosphatidylglycerol--prolipoprotein diacylglyceryl transferase">
    <location>
        <begin position="1"/>
        <end position="256"/>
    </location>
</feature>
<feature type="transmembrane region" description="Helical" evidence="1">
    <location>
        <begin position="19"/>
        <end position="39"/>
    </location>
</feature>
<feature type="transmembrane region" description="Helical" evidence="1">
    <location>
        <begin position="56"/>
        <end position="76"/>
    </location>
</feature>
<feature type="transmembrane region" description="Helical" evidence="1">
    <location>
        <begin position="91"/>
        <end position="111"/>
    </location>
</feature>
<feature type="transmembrane region" description="Helical" evidence="1">
    <location>
        <begin position="231"/>
        <end position="251"/>
    </location>
</feature>
<feature type="binding site" evidence="1">
    <location>
        <position position="139"/>
    </location>
    <ligand>
        <name>a 1,2-diacyl-sn-glycero-3-phospho-(1'-sn-glycerol)</name>
        <dbReference type="ChEBI" id="CHEBI:64716"/>
    </ligand>
</feature>
<dbReference type="EC" id="2.5.1.145" evidence="1"/>
<dbReference type="EMBL" id="AE017354">
    <property type="protein sequence ID" value="AAU28916.1"/>
    <property type="molecule type" value="Genomic_DNA"/>
</dbReference>
<dbReference type="RefSeq" id="WP_010948555.1">
    <property type="nucleotide sequence ID" value="NC_002942.5"/>
</dbReference>
<dbReference type="RefSeq" id="YP_096863.1">
    <property type="nucleotide sequence ID" value="NC_002942.5"/>
</dbReference>
<dbReference type="SMR" id="Q5ZRL2"/>
<dbReference type="STRING" id="272624.lpg2869"/>
<dbReference type="PaxDb" id="272624-lpg2869"/>
<dbReference type="GeneID" id="57036868"/>
<dbReference type="KEGG" id="lpn:lpg2869"/>
<dbReference type="PATRIC" id="fig|272624.6.peg.3056"/>
<dbReference type="eggNOG" id="COG0682">
    <property type="taxonomic scope" value="Bacteria"/>
</dbReference>
<dbReference type="HOGENOM" id="CLU_013386_1_0_6"/>
<dbReference type="OrthoDB" id="871140at2"/>
<dbReference type="UniPathway" id="UPA00664"/>
<dbReference type="Proteomes" id="UP000000609">
    <property type="component" value="Chromosome"/>
</dbReference>
<dbReference type="GO" id="GO:0005886">
    <property type="term" value="C:plasma membrane"/>
    <property type="evidence" value="ECO:0007669"/>
    <property type="project" value="UniProtKB-SubCell"/>
</dbReference>
<dbReference type="GO" id="GO:0008961">
    <property type="term" value="F:phosphatidylglycerol-prolipoprotein diacylglyceryl transferase activity"/>
    <property type="evidence" value="ECO:0007669"/>
    <property type="project" value="UniProtKB-UniRule"/>
</dbReference>
<dbReference type="GO" id="GO:0042158">
    <property type="term" value="P:lipoprotein biosynthetic process"/>
    <property type="evidence" value="ECO:0007669"/>
    <property type="project" value="UniProtKB-UniRule"/>
</dbReference>
<dbReference type="HAMAP" id="MF_01147">
    <property type="entry name" value="Lgt"/>
    <property type="match status" value="1"/>
</dbReference>
<dbReference type="InterPro" id="IPR001640">
    <property type="entry name" value="Lgt"/>
</dbReference>
<dbReference type="NCBIfam" id="TIGR00544">
    <property type="entry name" value="lgt"/>
    <property type="match status" value="1"/>
</dbReference>
<dbReference type="PANTHER" id="PTHR30589:SF0">
    <property type="entry name" value="PHOSPHATIDYLGLYCEROL--PROLIPOPROTEIN DIACYLGLYCERYL TRANSFERASE"/>
    <property type="match status" value="1"/>
</dbReference>
<dbReference type="PANTHER" id="PTHR30589">
    <property type="entry name" value="PROLIPOPROTEIN DIACYLGLYCERYL TRANSFERASE"/>
    <property type="match status" value="1"/>
</dbReference>
<dbReference type="Pfam" id="PF01790">
    <property type="entry name" value="LGT"/>
    <property type="match status" value="1"/>
</dbReference>
<dbReference type="PROSITE" id="PS01311">
    <property type="entry name" value="LGT"/>
    <property type="match status" value="1"/>
</dbReference>
<comment type="function">
    <text evidence="1">Catalyzes the transfer of the diacylglyceryl group from phosphatidylglycerol to the sulfhydryl group of the N-terminal cysteine of a prolipoprotein, the first step in the formation of mature lipoproteins.</text>
</comment>
<comment type="catalytic activity">
    <reaction evidence="1">
        <text>L-cysteinyl-[prolipoprotein] + a 1,2-diacyl-sn-glycero-3-phospho-(1'-sn-glycerol) = an S-1,2-diacyl-sn-glyceryl-L-cysteinyl-[prolipoprotein] + sn-glycerol 1-phosphate + H(+)</text>
        <dbReference type="Rhea" id="RHEA:56712"/>
        <dbReference type="Rhea" id="RHEA-COMP:14679"/>
        <dbReference type="Rhea" id="RHEA-COMP:14680"/>
        <dbReference type="ChEBI" id="CHEBI:15378"/>
        <dbReference type="ChEBI" id="CHEBI:29950"/>
        <dbReference type="ChEBI" id="CHEBI:57685"/>
        <dbReference type="ChEBI" id="CHEBI:64716"/>
        <dbReference type="ChEBI" id="CHEBI:140658"/>
        <dbReference type="EC" id="2.5.1.145"/>
    </reaction>
</comment>
<comment type="pathway">
    <text evidence="1">Protein modification; lipoprotein biosynthesis (diacylglyceryl transfer).</text>
</comment>
<comment type="subcellular location">
    <subcellularLocation>
        <location evidence="1">Cell inner membrane</location>
        <topology evidence="1">Multi-pass membrane protein</topology>
    </subcellularLocation>
</comment>
<comment type="similarity">
    <text evidence="1">Belongs to the Lgt family.</text>
</comment>
<accession>Q5ZRL2</accession>
<sequence length="256" mass="29346">MLTYPNINPIAFSLGPLKVHWYGLMYLIGFVGAWLLGYWRIKHYKLNWNNDQLSDLIFYSALGVILGGRVGYMLFYDFQEFIHHPWVLFKIWEGGMSFHGGLLGVVIAAWLFCRKYGKTFLEVGDFVAPLVPLGLAAGRLGNFINGELWGRVTDVPWGMIYPHVDDQPRHPSQLYEFGLEGVALFILIWCYASKPRQQGRVSALFLMGYAICRLIAESFRQPDSQLGFVAFGWLTMGQVLSIPMLLIGIWLWWAKR</sequence>
<protein>
    <recommendedName>
        <fullName evidence="1">Phosphatidylglycerol--prolipoprotein diacylglyceryl transferase</fullName>
        <ecNumber evidence="1">2.5.1.145</ecNumber>
    </recommendedName>
</protein>
<reference key="1">
    <citation type="journal article" date="2004" name="Science">
        <title>The genomic sequence of the accidental pathogen Legionella pneumophila.</title>
        <authorList>
            <person name="Chien M."/>
            <person name="Morozova I."/>
            <person name="Shi S."/>
            <person name="Sheng H."/>
            <person name="Chen J."/>
            <person name="Gomez S.M."/>
            <person name="Asamani G."/>
            <person name="Hill K."/>
            <person name="Nuara J."/>
            <person name="Feder M."/>
            <person name="Rineer J."/>
            <person name="Greenberg J.J."/>
            <person name="Steshenko V."/>
            <person name="Park S.H."/>
            <person name="Zhao B."/>
            <person name="Teplitskaya E."/>
            <person name="Edwards J.R."/>
            <person name="Pampou S."/>
            <person name="Georghiou A."/>
            <person name="Chou I.-C."/>
            <person name="Iannuccilli W."/>
            <person name="Ulz M.E."/>
            <person name="Kim D.H."/>
            <person name="Geringer-Sameth A."/>
            <person name="Goldsberry C."/>
            <person name="Morozov P."/>
            <person name="Fischer S.G."/>
            <person name="Segal G."/>
            <person name="Qu X."/>
            <person name="Rzhetsky A."/>
            <person name="Zhang P."/>
            <person name="Cayanis E."/>
            <person name="De Jong P.J."/>
            <person name="Ju J."/>
            <person name="Kalachikov S."/>
            <person name="Shuman H.A."/>
            <person name="Russo J.J."/>
        </authorList>
    </citation>
    <scope>NUCLEOTIDE SEQUENCE [LARGE SCALE GENOMIC DNA]</scope>
    <source>
        <strain>Philadelphia 1 / ATCC 33152 / DSM 7513</strain>
    </source>
</reference>
<gene>
    <name evidence="1" type="primary">lgt</name>
    <name type="ordered locus">lpg2869</name>
</gene>
<keyword id="KW-0997">Cell inner membrane</keyword>
<keyword id="KW-1003">Cell membrane</keyword>
<keyword id="KW-0472">Membrane</keyword>
<keyword id="KW-1185">Reference proteome</keyword>
<keyword id="KW-0808">Transferase</keyword>
<keyword id="KW-0812">Transmembrane</keyword>
<keyword id="KW-1133">Transmembrane helix</keyword>
<proteinExistence type="inferred from homology"/>